<gene>
    <name evidence="1" type="primary">MMM1</name>
    <name type="ordered locus">DEHA2G21538g</name>
</gene>
<dbReference type="EMBL" id="CR382139">
    <property type="protein sequence ID" value="CAG90989.2"/>
    <property type="molecule type" value="Genomic_DNA"/>
</dbReference>
<dbReference type="RefSeq" id="XP_462479.2">
    <property type="nucleotide sequence ID" value="XM_462479.1"/>
</dbReference>
<dbReference type="SMR" id="Q6BH42"/>
<dbReference type="FunCoup" id="Q6BH42">
    <property type="interactions" value="87"/>
</dbReference>
<dbReference type="STRING" id="284592.Q6BH42"/>
<dbReference type="GeneID" id="2905429"/>
<dbReference type="KEGG" id="dha:DEHA2G21538g"/>
<dbReference type="VEuPathDB" id="FungiDB:DEHA2G21538g"/>
<dbReference type="eggNOG" id="ENOG502QUUW">
    <property type="taxonomic scope" value="Eukaryota"/>
</dbReference>
<dbReference type="HOGENOM" id="CLU_032730_2_0_1"/>
<dbReference type="InParanoid" id="Q6BH42"/>
<dbReference type="OMA" id="WSFTQGL"/>
<dbReference type="OrthoDB" id="5599157at2759"/>
<dbReference type="Proteomes" id="UP000000599">
    <property type="component" value="Chromosome G"/>
</dbReference>
<dbReference type="GO" id="GO:0005789">
    <property type="term" value="C:endoplasmic reticulum membrane"/>
    <property type="evidence" value="ECO:0007669"/>
    <property type="project" value="UniProtKB-SubCell"/>
</dbReference>
<dbReference type="GO" id="GO:0032865">
    <property type="term" value="C:ERMES complex"/>
    <property type="evidence" value="ECO:0007669"/>
    <property type="project" value="UniProtKB-UniRule"/>
</dbReference>
<dbReference type="GO" id="GO:0008289">
    <property type="term" value="F:lipid binding"/>
    <property type="evidence" value="ECO:0007669"/>
    <property type="project" value="UniProtKB-KW"/>
</dbReference>
<dbReference type="GO" id="GO:0000002">
    <property type="term" value="P:mitochondrial genome maintenance"/>
    <property type="evidence" value="ECO:0007669"/>
    <property type="project" value="UniProtKB-UniRule"/>
</dbReference>
<dbReference type="GO" id="GO:1990456">
    <property type="term" value="P:mitochondrion-endoplasmic reticulum membrane tethering"/>
    <property type="evidence" value="ECO:0007669"/>
    <property type="project" value="TreeGrafter"/>
</dbReference>
<dbReference type="GO" id="GO:0015914">
    <property type="term" value="P:phospholipid transport"/>
    <property type="evidence" value="ECO:0007669"/>
    <property type="project" value="TreeGrafter"/>
</dbReference>
<dbReference type="GO" id="GO:0045040">
    <property type="term" value="P:protein insertion into mitochondrial outer membrane"/>
    <property type="evidence" value="ECO:0007669"/>
    <property type="project" value="UniProtKB-UniRule"/>
</dbReference>
<dbReference type="CDD" id="cd21671">
    <property type="entry name" value="SMP_Mmm1"/>
    <property type="match status" value="1"/>
</dbReference>
<dbReference type="HAMAP" id="MF_03103">
    <property type="entry name" value="Mmm1"/>
    <property type="match status" value="1"/>
</dbReference>
<dbReference type="InterPro" id="IPR027537">
    <property type="entry name" value="Mmm1"/>
</dbReference>
<dbReference type="InterPro" id="IPR019411">
    <property type="entry name" value="MMM1_dom"/>
</dbReference>
<dbReference type="InterPro" id="IPR031468">
    <property type="entry name" value="SMP_LBD"/>
</dbReference>
<dbReference type="PANTHER" id="PTHR13466:SF0">
    <property type="entry name" value="SMP-LTD DOMAIN-CONTAINING PROTEIN"/>
    <property type="match status" value="1"/>
</dbReference>
<dbReference type="PANTHER" id="PTHR13466">
    <property type="entry name" value="TEX2 PROTEIN-RELATED"/>
    <property type="match status" value="1"/>
</dbReference>
<dbReference type="Pfam" id="PF10296">
    <property type="entry name" value="MMM1"/>
    <property type="match status" value="1"/>
</dbReference>
<dbReference type="PROSITE" id="PS51847">
    <property type="entry name" value="SMP"/>
    <property type="match status" value="1"/>
</dbReference>
<protein>
    <recommendedName>
        <fullName evidence="1">Maintenance of mitochondrial morphology protein 1</fullName>
    </recommendedName>
</protein>
<proteinExistence type="inferred from homology"/>
<reference key="1">
    <citation type="journal article" date="2004" name="Nature">
        <title>Genome evolution in yeasts.</title>
        <authorList>
            <person name="Dujon B."/>
            <person name="Sherman D."/>
            <person name="Fischer G."/>
            <person name="Durrens P."/>
            <person name="Casaregola S."/>
            <person name="Lafontaine I."/>
            <person name="de Montigny J."/>
            <person name="Marck C."/>
            <person name="Neuveglise C."/>
            <person name="Talla E."/>
            <person name="Goffard N."/>
            <person name="Frangeul L."/>
            <person name="Aigle M."/>
            <person name="Anthouard V."/>
            <person name="Babour A."/>
            <person name="Barbe V."/>
            <person name="Barnay S."/>
            <person name="Blanchin S."/>
            <person name="Beckerich J.-M."/>
            <person name="Beyne E."/>
            <person name="Bleykasten C."/>
            <person name="Boisrame A."/>
            <person name="Boyer J."/>
            <person name="Cattolico L."/>
            <person name="Confanioleri F."/>
            <person name="de Daruvar A."/>
            <person name="Despons L."/>
            <person name="Fabre E."/>
            <person name="Fairhead C."/>
            <person name="Ferry-Dumazet H."/>
            <person name="Groppi A."/>
            <person name="Hantraye F."/>
            <person name="Hennequin C."/>
            <person name="Jauniaux N."/>
            <person name="Joyet P."/>
            <person name="Kachouri R."/>
            <person name="Kerrest A."/>
            <person name="Koszul R."/>
            <person name="Lemaire M."/>
            <person name="Lesur I."/>
            <person name="Ma L."/>
            <person name="Muller H."/>
            <person name="Nicaud J.-M."/>
            <person name="Nikolski M."/>
            <person name="Oztas S."/>
            <person name="Ozier-Kalogeropoulos O."/>
            <person name="Pellenz S."/>
            <person name="Potier S."/>
            <person name="Richard G.-F."/>
            <person name="Straub M.-L."/>
            <person name="Suleau A."/>
            <person name="Swennen D."/>
            <person name="Tekaia F."/>
            <person name="Wesolowski-Louvel M."/>
            <person name="Westhof E."/>
            <person name="Wirth B."/>
            <person name="Zeniou-Meyer M."/>
            <person name="Zivanovic Y."/>
            <person name="Bolotin-Fukuhara M."/>
            <person name="Thierry A."/>
            <person name="Bouchier C."/>
            <person name="Caudron B."/>
            <person name="Scarpelli C."/>
            <person name="Gaillardin C."/>
            <person name="Weissenbach J."/>
            <person name="Wincker P."/>
            <person name="Souciet J.-L."/>
        </authorList>
    </citation>
    <scope>NUCLEOTIDE SEQUENCE [LARGE SCALE GENOMIC DNA]</scope>
    <source>
        <strain>ATCC 36239 / CBS 767 / BCRC 21394 / JCM 1990 / NBRC 0083 / IGC 2968</strain>
    </source>
</reference>
<comment type="function">
    <text evidence="1">Component of the ERMES/MDM complex, which serves as a molecular tether to connect the endoplasmic reticulum (ER) and mitochondria. Components of this complex are involved in the control of mitochondrial shape and protein biogenesis, and function in nonvesicular lipid trafficking between the ER and mitochondria. The MDM12-MMM1 subcomplex functions in the major beta-barrel assembly pathway that is responsible for biogenesis of all outer membrane beta-barrel proteins, and acts in a late step after the SAM complex. The MDM10-MDM12-MMM1 subcomplex further acts in the TOM40-specific pathway after the action of the MDM12-MMM1 complex. Essential for establishing and maintaining the structure of mitochondria and maintenance of mtDNA nucleoids.</text>
</comment>
<comment type="subunit">
    <text evidence="1">Homodimer. Component of the ER-mitochondria encounter structure (ERMES) or MDM complex, composed of MMM1, MDM10, MDM12 and MDM34. A MMM1 homodimer associates with one molecule of MDM12 on each side in a pairwise head-to-tail manner, and the SMP-LTD domains of MMM1 and MDM12 generate a continuous hydrophobic tunnel for phospholipid trafficking.</text>
</comment>
<comment type="subcellular location">
    <subcellularLocation>
        <location evidence="1">Endoplasmic reticulum membrane</location>
        <topology evidence="1">Single-pass type I membrane protein</topology>
    </subcellularLocation>
    <text evidence="1">The ERMES/MDM complex localizes to a few discrete foci (around 10 per single cell), that represent mitochondria-endoplasmic reticulum junctions. These foci are often found next to mtDNA nucleoids.</text>
</comment>
<comment type="domain">
    <text evidence="1">The SMP-LTD domain is a barrel-like domain that can bind various types of glycerophospholipids in its interior and mediate their transfer between two adjacent bilayers.</text>
</comment>
<comment type="similarity">
    <text evidence="1">Belongs to the MMM1 family.</text>
</comment>
<accession>Q6BH42</accession>
<feature type="chain" id="PRO_0000384229" description="Maintenance of mitochondrial morphology protein 1">
    <location>
        <begin position="1"/>
        <end position="448"/>
    </location>
</feature>
<feature type="topological domain" description="Lumenal" evidence="1">
    <location>
        <begin position="1"/>
        <end position="74"/>
    </location>
</feature>
<feature type="transmembrane region" description="Helical" evidence="1">
    <location>
        <begin position="75"/>
        <end position="95"/>
    </location>
</feature>
<feature type="topological domain" description="Cytoplasmic" evidence="1">
    <location>
        <begin position="96"/>
        <end position="448"/>
    </location>
</feature>
<feature type="domain" description="SMP-LTD" evidence="1">
    <location>
        <begin position="164"/>
        <end position="419"/>
    </location>
</feature>
<feature type="region of interest" description="Disordered" evidence="2">
    <location>
        <begin position="119"/>
        <end position="144"/>
    </location>
</feature>
<feature type="region of interest" description="Disordered" evidence="2">
    <location>
        <begin position="303"/>
        <end position="357"/>
    </location>
</feature>
<feature type="compositionally biased region" description="Basic and acidic residues" evidence="2">
    <location>
        <begin position="127"/>
        <end position="140"/>
    </location>
</feature>
<feature type="compositionally biased region" description="Low complexity" evidence="2">
    <location>
        <begin position="313"/>
        <end position="332"/>
    </location>
</feature>
<feature type="compositionally biased region" description="Basic and acidic residues" evidence="2">
    <location>
        <begin position="345"/>
        <end position="356"/>
    </location>
</feature>
<organism>
    <name type="scientific">Debaryomyces hansenii (strain ATCC 36239 / CBS 767 / BCRC 21394 / JCM 1990 / NBRC 0083 / IGC 2968)</name>
    <name type="common">Yeast</name>
    <name type="synonym">Torulaspora hansenii</name>
    <dbReference type="NCBI Taxonomy" id="284592"/>
    <lineage>
        <taxon>Eukaryota</taxon>
        <taxon>Fungi</taxon>
        <taxon>Dikarya</taxon>
        <taxon>Ascomycota</taxon>
        <taxon>Saccharomycotina</taxon>
        <taxon>Pichiomycetes</taxon>
        <taxon>Debaryomycetaceae</taxon>
        <taxon>Debaryomyces</taxon>
    </lineage>
</organism>
<keyword id="KW-0256">Endoplasmic reticulum</keyword>
<keyword id="KW-0445">Lipid transport</keyword>
<keyword id="KW-0446">Lipid-binding</keyword>
<keyword id="KW-0472">Membrane</keyword>
<keyword id="KW-1185">Reference proteome</keyword>
<keyword id="KW-0812">Transmembrane</keyword>
<keyword id="KW-1133">Transmembrane helix</keyword>
<keyword id="KW-0813">Transport</keyword>
<name>MMM1_DEBHA</name>
<sequence>MTESVIYSGTSELISADEDNTETTRAHLLSFEQLQAQLKAQQELFQQQRELFNNDNVHTSSIPTLNHTWSFTQGLVVGQLSVIVVVAIFIKFFVFADSSATTTTTSSSNKDISGVIVKRNKNVRGTSNEDKDPNNNKEDDLNSPNLSKISTILEKTYYDVENHSPESLDWFNVLIAQTISQLRTEALLSDNIYHSLNEFLTNSDLPDYMDKIKLTEIDIGDDFPIFSNCRIKHSKDRSGRLEAKIDVDLSDTLTLGIETRLLLNHPRPLTAVLPVQLSVSIVRFSGCLTVALINTNDEEFLDLQNVTTPSPGPSNEPNSQNQTQQPTPVNNSSSRASHDVPSSSETKHSKAKRSQEDTGTALMFSFSPDYRLEFTVKSLIGSRAKLQDVPKISSLIESKLRSWFIERCIEPRFQVVKVPSLWPRRQNTREPVHSNANGIVDKTEEASI</sequence>
<evidence type="ECO:0000255" key="1">
    <source>
        <dbReference type="HAMAP-Rule" id="MF_03103"/>
    </source>
</evidence>
<evidence type="ECO:0000256" key="2">
    <source>
        <dbReference type="SAM" id="MobiDB-lite"/>
    </source>
</evidence>